<accession>Q39JJ6</accession>
<proteinExistence type="inferred from homology"/>
<organism>
    <name type="scientific">Burkholderia lata (strain ATCC 17760 / DSM 23089 / LMG 22485 / NCIMB 9086 / R18194 / 383)</name>
    <dbReference type="NCBI Taxonomy" id="482957"/>
    <lineage>
        <taxon>Bacteria</taxon>
        <taxon>Pseudomonadati</taxon>
        <taxon>Pseudomonadota</taxon>
        <taxon>Betaproteobacteria</taxon>
        <taxon>Burkholderiales</taxon>
        <taxon>Burkholderiaceae</taxon>
        <taxon>Burkholderia</taxon>
        <taxon>Burkholderia cepacia complex</taxon>
    </lineage>
</organism>
<feature type="chain" id="PRO_0000236703" description="Tyrosine--tRNA ligase">
    <location>
        <begin position="1"/>
        <end position="413"/>
    </location>
</feature>
<feature type="domain" description="S4 RNA-binding" evidence="1">
    <location>
        <begin position="351"/>
        <end position="411"/>
    </location>
</feature>
<feature type="short sequence motif" description="'HIGH' region">
    <location>
        <begin position="59"/>
        <end position="68"/>
    </location>
</feature>
<feature type="short sequence motif" description="'KMSKS' region">
    <location>
        <begin position="243"/>
        <end position="247"/>
    </location>
</feature>
<feature type="binding site" evidence="1">
    <location>
        <position position="246"/>
    </location>
    <ligand>
        <name>ATP</name>
        <dbReference type="ChEBI" id="CHEBI:30616"/>
    </ligand>
</feature>
<comment type="function">
    <text evidence="1">Catalyzes the attachment of tyrosine to tRNA(Tyr) in a two-step reaction: tyrosine is first activated by ATP to form Tyr-AMP and then transferred to the acceptor end of tRNA(Tyr).</text>
</comment>
<comment type="catalytic activity">
    <reaction evidence="1">
        <text>tRNA(Tyr) + L-tyrosine + ATP = L-tyrosyl-tRNA(Tyr) + AMP + diphosphate + H(+)</text>
        <dbReference type="Rhea" id="RHEA:10220"/>
        <dbReference type="Rhea" id="RHEA-COMP:9706"/>
        <dbReference type="Rhea" id="RHEA-COMP:9707"/>
        <dbReference type="ChEBI" id="CHEBI:15378"/>
        <dbReference type="ChEBI" id="CHEBI:30616"/>
        <dbReference type="ChEBI" id="CHEBI:33019"/>
        <dbReference type="ChEBI" id="CHEBI:58315"/>
        <dbReference type="ChEBI" id="CHEBI:78442"/>
        <dbReference type="ChEBI" id="CHEBI:78536"/>
        <dbReference type="ChEBI" id="CHEBI:456215"/>
        <dbReference type="EC" id="6.1.1.1"/>
    </reaction>
</comment>
<comment type="subunit">
    <text evidence="1">Homodimer.</text>
</comment>
<comment type="subcellular location">
    <subcellularLocation>
        <location evidence="1">Cytoplasm</location>
    </subcellularLocation>
</comment>
<comment type="similarity">
    <text evidence="1">Belongs to the class-I aminoacyl-tRNA synthetase family. TyrS type 2 subfamily.</text>
</comment>
<gene>
    <name evidence="1" type="primary">tyrS</name>
    <name type="ordered locus">Bcep18194_A3769</name>
</gene>
<name>SYY_BURL3</name>
<keyword id="KW-0030">Aminoacyl-tRNA synthetase</keyword>
<keyword id="KW-0067">ATP-binding</keyword>
<keyword id="KW-0963">Cytoplasm</keyword>
<keyword id="KW-0436">Ligase</keyword>
<keyword id="KW-0547">Nucleotide-binding</keyword>
<keyword id="KW-0648">Protein biosynthesis</keyword>
<keyword id="KW-0694">RNA-binding</keyword>
<dbReference type="EC" id="6.1.1.1" evidence="1"/>
<dbReference type="EMBL" id="CP000151">
    <property type="protein sequence ID" value="ABB07370.1"/>
    <property type="molecule type" value="Genomic_DNA"/>
</dbReference>
<dbReference type="RefSeq" id="WP_011350958.1">
    <property type="nucleotide sequence ID" value="NC_007510.1"/>
</dbReference>
<dbReference type="SMR" id="Q39JJ6"/>
<dbReference type="GeneID" id="45093682"/>
<dbReference type="KEGG" id="bur:Bcep18194_A3769"/>
<dbReference type="PATRIC" id="fig|482957.22.peg.629"/>
<dbReference type="HOGENOM" id="CLU_024003_5_0_4"/>
<dbReference type="Proteomes" id="UP000002705">
    <property type="component" value="Chromosome 1"/>
</dbReference>
<dbReference type="GO" id="GO:0005829">
    <property type="term" value="C:cytosol"/>
    <property type="evidence" value="ECO:0007669"/>
    <property type="project" value="TreeGrafter"/>
</dbReference>
<dbReference type="GO" id="GO:0005524">
    <property type="term" value="F:ATP binding"/>
    <property type="evidence" value="ECO:0007669"/>
    <property type="project" value="UniProtKB-UniRule"/>
</dbReference>
<dbReference type="GO" id="GO:0003723">
    <property type="term" value="F:RNA binding"/>
    <property type="evidence" value="ECO:0007669"/>
    <property type="project" value="UniProtKB-KW"/>
</dbReference>
<dbReference type="GO" id="GO:0004831">
    <property type="term" value="F:tyrosine-tRNA ligase activity"/>
    <property type="evidence" value="ECO:0007669"/>
    <property type="project" value="UniProtKB-UniRule"/>
</dbReference>
<dbReference type="GO" id="GO:0006437">
    <property type="term" value="P:tyrosyl-tRNA aminoacylation"/>
    <property type="evidence" value="ECO:0007669"/>
    <property type="project" value="UniProtKB-UniRule"/>
</dbReference>
<dbReference type="CDD" id="cd00165">
    <property type="entry name" value="S4"/>
    <property type="match status" value="1"/>
</dbReference>
<dbReference type="CDD" id="cd00805">
    <property type="entry name" value="TyrRS_core"/>
    <property type="match status" value="1"/>
</dbReference>
<dbReference type="FunFam" id="1.10.240.10:FF:000006">
    <property type="entry name" value="Tyrosine--tRNA ligase"/>
    <property type="match status" value="1"/>
</dbReference>
<dbReference type="FunFam" id="3.10.290.10:FF:000022">
    <property type="entry name" value="Tyrosine--tRNA ligase"/>
    <property type="match status" value="1"/>
</dbReference>
<dbReference type="FunFam" id="3.40.50.620:FF:000061">
    <property type="entry name" value="Tyrosine--tRNA ligase"/>
    <property type="match status" value="1"/>
</dbReference>
<dbReference type="Gene3D" id="3.40.50.620">
    <property type="entry name" value="HUPs"/>
    <property type="match status" value="1"/>
</dbReference>
<dbReference type="Gene3D" id="3.10.290.10">
    <property type="entry name" value="RNA-binding S4 domain"/>
    <property type="match status" value="1"/>
</dbReference>
<dbReference type="Gene3D" id="1.10.240.10">
    <property type="entry name" value="Tyrosyl-Transfer RNA Synthetase"/>
    <property type="match status" value="1"/>
</dbReference>
<dbReference type="HAMAP" id="MF_02007">
    <property type="entry name" value="Tyr_tRNA_synth_type2"/>
    <property type="match status" value="1"/>
</dbReference>
<dbReference type="InterPro" id="IPR001412">
    <property type="entry name" value="aa-tRNA-synth_I_CS"/>
</dbReference>
<dbReference type="InterPro" id="IPR002305">
    <property type="entry name" value="aa-tRNA-synth_Ic"/>
</dbReference>
<dbReference type="InterPro" id="IPR014729">
    <property type="entry name" value="Rossmann-like_a/b/a_fold"/>
</dbReference>
<dbReference type="InterPro" id="IPR002942">
    <property type="entry name" value="S4_RNA-bd"/>
</dbReference>
<dbReference type="InterPro" id="IPR036986">
    <property type="entry name" value="S4_RNA-bd_sf"/>
</dbReference>
<dbReference type="InterPro" id="IPR002307">
    <property type="entry name" value="Tyr-tRNA-ligase"/>
</dbReference>
<dbReference type="InterPro" id="IPR024088">
    <property type="entry name" value="Tyr-tRNA-ligase_bac-type"/>
</dbReference>
<dbReference type="InterPro" id="IPR024108">
    <property type="entry name" value="Tyr-tRNA-ligase_bac_2"/>
</dbReference>
<dbReference type="NCBIfam" id="TIGR00234">
    <property type="entry name" value="tyrS"/>
    <property type="match status" value="1"/>
</dbReference>
<dbReference type="PANTHER" id="PTHR11766:SF1">
    <property type="entry name" value="TYROSINE--TRNA LIGASE"/>
    <property type="match status" value="1"/>
</dbReference>
<dbReference type="PANTHER" id="PTHR11766">
    <property type="entry name" value="TYROSYL-TRNA SYNTHETASE"/>
    <property type="match status" value="1"/>
</dbReference>
<dbReference type="Pfam" id="PF01479">
    <property type="entry name" value="S4"/>
    <property type="match status" value="1"/>
</dbReference>
<dbReference type="Pfam" id="PF00579">
    <property type="entry name" value="tRNA-synt_1b"/>
    <property type="match status" value="1"/>
</dbReference>
<dbReference type="PRINTS" id="PR01040">
    <property type="entry name" value="TRNASYNTHTYR"/>
</dbReference>
<dbReference type="SMART" id="SM00363">
    <property type="entry name" value="S4"/>
    <property type="match status" value="1"/>
</dbReference>
<dbReference type="SUPFAM" id="SSF55174">
    <property type="entry name" value="Alpha-L RNA-binding motif"/>
    <property type="match status" value="1"/>
</dbReference>
<dbReference type="SUPFAM" id="SSF52374">
    <property type="entry name" value="Nucleotidylyl transferase"/>
    <property type="match status" value="1"/>
</dbReference>
<dbReference type="PROSITE" id="PS00178">
    <property type="entry name" value="AA_TRNA_LIGASE_I"/>
    <property type="match status" value="1"/>
</dbReference>
<dbReference type="PROSITE" id="PS50889">
    <property type="entry name" value="S4"/>
    <property type="match status" value="1"/>
</dbReference>
<sequence>MSTEPSSKPVFPITDEVRHALAVTKRGVDELLVEEEFAQKLARSAATGTPLRIKLGLDPTAPDIHIGHTVVLNKMRQLQDLGHTVIFLIGDFTSLIGDPSGRNATRPPLTREQIESNAKTYFEQAALVLDRDKTEIRYNSEWSMPLGADGMIKLASRYTVARILEREDFTKRFQGGVPISIHEFLYPLMQGYDSVALNADLELGGTDQKFNLLVGRELQKQYGQEQQCILTMPLLEGLDGVEKMSKSKGNYVGISEQPTDMFGKLMSISDTLMWRYFELLSFRPMDEIGGFKREIEGGRNPRDFKVLLAQEIVARFHSQADAERALEDFNHRAKGGVPDDIPSVTLAGAPLAIGQLLKQAGLVPSTSEALRNIEQGGVKIDGATVSDKGLKVEAGEFVVQVGKRRFARVTLTA</sequence>
<evidence type="ECO:0000255" key="1">
    <source>
        <dbReference type="HAMAP-Rule" id="MF_02007"/>
    </source>
</evidence>
<protein>
    <recommendedName>
        <fullName evidence="1">Tyrosine--tRNA ligase</fullName>
        <ecNumber evidence="1">6.1.1.1</ecNumber>
    </recommendedName>
    <alternativeName>
        <fullName evidence="1">Tyrosyl-tRNA synthetase</fullName>
        <shortName evidence="1">TyrRS</shortName>
    </alternativeName>
</protein>
<reference key="1">
    <citation type="submission" date="2005-10" db="EMBL/GenBank/DDBJ databases">
        <title>Complete sequence of chromosome 1 of Burkholderia sp. 383.</title>
        <authorList>
            <consortium name="US DOE Joint Genome Institute"/>
            <person name="Copeland A."/>
            <person name="Lucas S."/>
            <person name="Lapidus A."/>
            <person name="Barry K."/>
            <person name="Detter J.C."/>
            <person name="Glavina T."/>
            <person name="Hammon N."/>
            <person name="Israni S."/>
            <person name="Pitluck S."/>
            <person name="Chain P."/>
            <person name="Malfatti S."/>
            <person name="Shin M."/>
            <person name="Vergez L."/>
            <person name="Schmutz J."/>
            <person name="Larimer F."/>
            <person name="Land M."/>
            <person name="Kyrpides N."/>
            <person name="Lykidis A."/>
            <person name="Richardson P."/>
        </authorList>
    </citation>
    <scope>NUCLEOTIDE SEQUENCE [LARGE SCALE GENOMIC DNA]</scope>
    <source>
        <strain>ATCC 17760 / DSM 23089 / LMG 22485 / NCIMB 9086 / R18194 / 383</strain>
    </source>
</reference>